<organism>
    <name type="scientific">Escherichia coli O157:H7</name>
    <dbReference type="NCBI Taxonomy" id="83334"/>
    <lineage>
        <taxon>Bacteria</taxon>
        <taxon>Pseudomonadati</taxon>
        <taxon>Pseudomonadota</taxon>
        <taxon>Gammaproteobacteria</taxon>
        <taxon>Enterobacterales</taxon>
        <taxon>Enterobacteriaceae</taxon>
        <taxon>Escherichia</taxon>
    </lineage>
</organism>
<sequence>MNIDTREITLEPADNARLLSLCGPFDDNIKQLERRLGIEINRRDNHFKLTGRPICVTAAADILRSLYVDTAPMRGQIQDIEPEQIHLAIKEARVLEQSAESVPEYGKAVNIKTKRGVIKPRTPNQAQYIANILDHDITFGVGPAGTGKTYLAVAAAVDALERQEIRRILLTRPAVEAGEKLGFLPGDLSQKVDPYLRPLYDALFEMLGFEKVEKLIERNVIEVAPLAYMRGRTLNDAFIILDESQNTTIEQMKMFLTRIGFNSKAVITGDVTQIDLPRNTKSGLRHAIEVLADVEEISFNFFHSEDVVRHPVVARIVNAYEAWEEAEQKRKAALAAERKREEQEQK</sequence>
<evidence type="ECO:0000255" key="1"/>
<evidence type="ECO:0000305" key="2"/>
<dbReference type="EMBL" id="AE005174">
    <property type="protein sequence ID" value="AAG54993.1"/>
    <property type="status" value="ALT_INIT"/>
    <property type="molecule type" value="Genomic_DNA"/>
</dbReference>
<dbReference type="EMBL" id="BA000007">
    <property type="protein sequence ID" value="BAB34121.1"/>
    <property type="status" value="ALT_INIT"/>
    <property type="molecule type" value="Genomic_DNA"/>
</dbReference>
<dbReference type="PIR" id="B90716">
    <property type="entry name" value="B90716"/>
</dbReference>
<dbReference type="PIR" id="E85566">
    <property type="entry name" value="E85566"/>
</dbReference>
<dbReference type="RefSeq" id="NP_308725.2">
    <property type="nucleotide sequence ID" value="NC_002695.1"/>
</dbReference>
<dbReference type="RefSeq" id="WP_001018040.1">
    <property type="nucleotide sequence ID" value="NZ_VOAI01000012.1"/>
</dbReference>
<dbReference type="SMR" id="P0A9K5"/>
<dbReference type="STRING" id="155864.Z0809"/>
<dbReference type="GeneID" id="917059"/>
<dbReference type="KEGG" id="ece:Z0809"/>
<dbReference type="KEGG" id="ecs:ECs_0698"/>
<dbReference type="PATRIC" id="fig|386585.9.peg.812"/>
<dbReference type="eggNOG" id="COG1702">
    <property type="taxonomic scope" value="Bacteria"/>
</dbReference>
<dbReference type="HOGENOM" id="CLU_051654_0_0_6"/>
<dbReference type="OMA" id="NLCGQFD"/>
<dbReference type="Proteomes" id="UP000000558">
    <property type="component" value="Chromosome"/>
</dbReference>
<dbReference type="Proteomes" id="UP000002519">
    <property type="component" value="Chromosome"/>
</dbReference>
<dbReference type="GO" id="GO:0005829">
    <property type="term" value="C:cytosol"/>
    <property type="evidence" value="ECO:0007669"/>
    <property type="project" value="TreeGrafter"/>
</dbReference>
<dbReference type="GO" id="GO:0005524">
    <property type="term" value="F:ATP binding"/>
    <property type="evidence" value="ECO:0007669"/>
    <property type="project" value="UniProtKB-KW"/>
</dbReference>
<dbReference type="FunFam" id="3.40.50.300:FF:000013">
    <property type="entry name" value="PhoH family ATPase"/>
    <property type="match status" value="1"/>
</dbReference>
<dbReference type="Gene3D" id="3.40.50.300">
    <property type="entry name" value="P-loop containing nucleotide triphosphate hydrolases"/>
    <property type="match status" value="1"/>
</dbReference>
<dbReference type="InterPro" id="IPR027417">
    <property type="entry name" value="P-loop_NTPase"/>
</dbReference>
<dbReference type="InterPro" id="IPR003714">
    <property type="entry name" value="PhoH"/>
</dbReference>
<dbReference type="InterPro" id="IPR051451">
    <property type="entry name" value="PhoH2-like"/>
</dbReference>
<dbReference type="PANTHER" id="PTHR30473:SF1">
    <property type="entry name" value="PHOH-LIKE PROTEIN"/>
    <property type="match status" value="1"/>
</dbReference>
<dbReference type="PANTHER" id="PTHR30473">
    <property type="entry name" value="PROTEIN PHOH"/>
    <property type="match status" value="1"/>
</dbReference>
<dbReference type="Pfam" id="PF02562">
    <property type="entry name" value="PhoH"/>
    <property type="match status" value="1"/>
</dbReference>
<dbReference type="SUPFAM" id="SSF52540">
    <property type="entry name" value="P-loop containing nucleoside triphosphate hydrolases"/>
    <property type="match status" value="1"/>
</dbReference>
<gene>
    <name type="primary">ybeZ</name>
    <name type="ordered locus">Z0809</name>
    <name type="ordered locus">ECs0698</name>
</gene>
<proteinExistence type="inferred from homology"/>
<reference key="1">
    <citation type="journal article" date="2001" name="Nature">
        <title>Genome sequence of enterohaemorrhagic Escherichia coli O157:H7.</title>
        <authorList>
            <person name="Perna N.T."/>
            <person name="Plunkett G. III"/>
            <person name="Burland V."/>
            <person name="Mau B."/>
            <person name="Glasner J.D."/>
            <person name="Rose D.J."/>
            <person name="Mayhew G.F."/>
            <person name="Evans P.S."/>
            <person name="Gregor J."/>
            <person name="Kirkpatrick H.A."/>
            <person name="Posfai G."/>
            <person name="Hackett J."/>
            <person name="Klink S."/>
            <person name="Boutin A."/>
            <person name="Shao Y."/>
            <person name="Miller L."/>
            <person name="Grotbeck E.J."/>
            <person name="Davis N.W."/>
            <person name="Lim A."/>
            <person name="Dimalanta E.T."/>
            <person name="Potamousis K."/>
            <person name="Apodaca J."/>
            <person name="Anantharaman T.S."/>
            <person name="Lin J."/>
            <person name="Yen G."/>
            <person name="Schwartz D.C."/>
            <person name="Welch R.A."/>
            <person name="Blattner F.R."/>
        </authorList>
    </citation>
    <scope>NUCLEOTIDE SEQUENCE [LARGE SCALE GENOMIC DNA]</scope>
    <source>
        <strain>O157:H7 / EDL933 / ATCC 700927 / EHEC</strain>
    </source>
</reference>
<reference key="2">
    <citation type="journal article" date="2001" name="DNA Res.">
        <title>Complete genome sequence of enterohemorrhagic Escherichia coli O157:H7 and genomic comparison with a laboratory strain K-12.</title>
        <authorList>
            <person name="Hayashi T."/>
            <person name="Makino K."/>
            <person name="Ohnishi M."/>
            <person name="Kurokawa K."/>
            <person name="Ishii K."/>
            <person name="Yokoyama K."/>
            <person name="Han C.-G."/>
            <person name="Ohtsubo E."/>
            <person name="Nakayama K."/>
            <person name="Murata T."/>
            <person name="Tanaka M."/>
            <person name="Tobe T."/>
            <person name="Iida T."/>
            <person name="Takami H."/>
            <person name="Honda T."/>
            <person name="Sasakawa C."/>
            <person name="Ogasawara N."/>
            <person name="Yasunaga T."/>
            <person name="Kuhara S."/>
            <person name="Shiba T."/>
            <person name="Hattori M."/>
            <person name="Shinagawa H."/>
        </authorList>
    </citation>
    <scope>NUCLEOTIDE SEQUENCE [LARGE SCALE GENOMIC DNA]</scope>
    <source>
        <strain>O157:H7 / Sakai / RIMD 0509952 / EHEC</strain>
    </source>
</reference>
<name>PHOL_ECO57</name>
<comment type="subcellular location">
    <subcellularLocation>
        <location evidence="2">Cytoplasm</location>
    </subcellularLocation>
</comment>
<comment type="similarity">
    <text evidence="2">Belongs to the PhoH family.</text>
</comment>
<comment type="sequence caution" evidence="2">
    <conflict type="erroneous initiation">
        <sequence resource="EMBL-CDS" id="AAG54993"/>
    </conflict>
</comment>
<comment type="sequence caution" evidence="2">
    <conflict type="erroneous initiation">
        <sequence resource="EMBL-CDS" id="BAB34121"/>
    </conflict>
</comment>
<protein>
    <recommendedName>
        <fullName>PhoH-like protein</fullName>
    </recommendedName>
</protein>
<keyword id="KW-0067">ATP-binding</keyword>
<keyword id="KW-0963">Cytoplasm</keyword>
<keyword id="KW-0547">Nucleotide-binding</keyword>
<keyword id="KW-1185">Reference proteome</keyword>
<accession>P0A9K5</accession>
<accession>P77349</accession>
<feature type="chain" id="PRO_0000201154" description="PhoH-like protein">
    <location>
        <begin position="1"/>
        <end position="346"/>
    </location>
</feature>
<feature type="binding site" evidence="1">
    <location>
        <begin position="142"/>
        <end position="149"/>
    </location>
    <ligand>
        <name>ATP</name>
        <dbReference type="ChEBI" id="CHEBI:30616"/>
    </ligand>
</feature>